<keyword id="KW-1003">Cell membrane</keyword>
<keyword id="KW-0210">Decarboxylase</keyword>
<keyword id="KW-0444">Lipid biosynthesis</keyword>
<keyword id="KW-0443">Lipid metabolism</keyword>
<keyword id="KW-0456">Lyase</keyword>
<keyword id="KW-0472">Membrane</keyword>
<keyword id="KW-0594">Phospholipid biosynthesis</keyword>
<keyword id="KW-1208">Phospholipid metabolism</keyword>
<keyword id="KW-0670">Pyruvate</keyword>
<keyword id="KW-0865">Zymogen</keyword>
<sequence>MSLIDTVRNTLVPVHREGYRFIAIFFVVSLALGFLWEPLMWIGFLLTAWCAYFFRDPERMTPIDDDLVISPADGTVSSVATVTPPEELGLGSEPMLRISVFMNVFNGHVNRAPMSGTVRRIAYRAGKFVNAELDKASQENERNGLVLETKHGQIGVVQIAGLVARRILCWTRESASLEAGERFGLIRFGSRLDVFLPAGAEPRVTVGQTATAGETVIAEFGSAKGPVISRRA</sequence>
<evidence type="ECO:0000255" key="1">
    <source>
        <dbReference type="HAMAP-Rule" id="MF_00664"/>
    </source>
</evidence>
<proteinExistence type="inferred from homology"/>
<name>PSD_SINMW</name>
<dbReference type="EC" id="4.1.1.65" evidence="1"/>
<dbReference type="EMBL" id="CP000738">
    <property type="protein sequence ID" value="ABR59579.1"/>
    <property type="molecule type" value="Genomic_DNA"/>
</dbReference>
<dbReference type="RefSeq" id="WP_011974924.1">
    <property type="nucleotide sequence ID" value="NC_009636.1"/>
</dbReference>
<dbReference type="RefSeq" id="YP_001326414.1">
    <property type="nucleotide sequence ID" value="NC_009636.1"/>
</dbReference>
<dbReference type="STRING" id="366394.Smed_0723"/>
<dbReference type="KEGG" id="smd:Smed_0723"/>
<dbReference type="PATRIC" id="fig|366394.8.peg.3828"/>
<dbReference type="eggNOG" id="COG0688">
    <property type="taxonomic scope" value="Bacteria"/>
</dbReference>
<dbReference type="HOGENOM" id="CLU_072492_0_0_5"/>
<dbReference type="OrthoDB" id="9790893at2"/>
<dbReference type="UniPathway" id="UPA00558">
    <property type="reaction ID" value="UER00616"/>
</dbReference>
<dbReference type="Proteomes" id="UP000001108">
    <property type="component" value="Chromosome"/>
</dbReference>
<dbReference type="GO" id="GO:0005886">
    <property type="term" value="C:plasma membrane"/>
    <property type="evidence" value="ECO:0007669"/>
    <property type="project" value="UniProtKB-SubCell"/>
</dbReference>
<dbReference type="GO" id="GO:0004609">
    <property type="term" value="F:phosphatidylserine decarboxylase activity"/>
    <property type="evidence" value="ECO:0007669"/>
    <property type="project" value="UniProtKB-UniRule"/>
</dbReference>
<dbReference type="GO" id="GO:0006646">
    <property type="term" value="P:phosphatidylethanolamine biosynthetic process"/>
    <property type="evidence" value="ECO:0007669"/>
    <property type="project" value="UniProtKB-UniRule"/>
</dbReference>
<dbReference type="HAMAP" id="MF_00664">
    <property type="entry name" value="PS_decarb_PSD_A"/>
    <property type="match status" value="1"/>
</dbReference>
<dbReference type="InterPro" id="IPR003817">
    <property type="entry name" value="PS_Dcarbxylase"/>
</dbReference>
<dbReference type="InterPro" id="IPR033175">
    <property type="entry name" value="PSD-A"/>
</dbReference>
<dbReference type="NCBIfam" id="NF003677">
    <property type="entry name" value="PRK05305.1-1"/>
    <property type="match status" value="1"/>
</dbReference>
<dbReference type="NCBIfam" id="NF003678">
    <property type="entry name" value="PRK05305.1-2"/>
    <property type="match status" value="1"/>
</dbReference>
<dbReference type="NCBIfam" id="NF003679">
    <property type="entry name" value="PRK05305.1-3"/>
    <property type="match status" value="1"/>
</dbReference>
<dbReference type="NCBIfam" id="NF003685">
    <property type="entry name" value="PRK05305.2-5"/>
    <property type="match status" value="1"/>
</dbReference>
<dbReference type="PANTHER" id="PTHR35809">
    <property type="entry name" value="ARCHAETIDYLSERINE DECARBOXYLASE PROENZYME-RELATED"/>
    <property type="match status" value="1"/>
</dbReference>
<dbReference type="PANTHER" id="PTHR35809:SF1">
    <property type="entry name" value="ARCHAETIDYLSERINE DECARBOXYLASE PROENZYME-RELATED"/>
    <property type="match status" value="1"/>
</dbReference>
<dbReference type="Pfam" id="PF02666">
    <property type="entry name" value="PS_Dcarbxylase"/>
    <property type="match status" value="1"/>
</dbReference>
<organism>
    <name type="scientific">Sinorhizobium medicae (strain WSM419)</name>
    <name type="common">Ensifer medicae</name>
    <dbReference type="NCBI Taxonomy" id="366394"/>
    <lineage>
        <taxon>Bacteria</taxon>
        <taxon>Pseudomonadati</taxon>
        <taxon>Pseudomonadota</taxon>
        <taxon>Alphaproteobacteria</taxon>
        <taxon>Hyphomicrobiales</taxon>
        <taxon>Rhizobiaceae</taxon>
        <taxon>Sinorhizobium/Ensifer group</taxon>
        <taxon>Sinorhizobium</taxon>
    </lineage>
</organism>
<accession>A6U7E9</accession>
<comment type="function">
    <text evidence="1">Catalyzes the formation of phosphatidylethanolamine (PtdEtn) from phosphatidylserine (PtdSer).</text>
</comment>
<comment type="catalytic activity">
    <reaction evidence="1">
        <text>a 1,2-diacyl-sn-glycero-3-phospho-L-serine + H(+) = a 1,2-diacyl-sn-glycero-3-phosphoethanolamine + CO2</text>
        <dbReference type="Rhea" id="RHEA:20828"/>
        <dbReference type="ChEBI" id="CHEBI:15378"/>
        <dbReference type="ChEBI" id="CHEBI:16526"/>
        <dbReference type="ChEBI" id="CHEBI:57262"/>
        <dbReference type="ChEBI" id="CHEBI:64612"/>
        <dbReference type="EC" id="4.1.1.65"/>
    </reaction>
</comment>
<comment type="cofactor">
    <cofactor evidence="1">
        <name>pyruvate</name>
        <dbReference type="ChEBI" id="CHEBI:15361"/>
    </cofactor>
    <text evidence="1">Binds 1 pyruvoyl group covalently per subunit.</text>
</comment>
<comment type="pathway">
    <text evidence="1">Phospholipid metabolism; phosphatidylethanolamine biosynthesis; phosphatidylethanolamine from CDP-diacylglycerol: step 2/2.</text>
</comment>
<comment type="subunit">
    <text evidence="1">Heterodimer of a large membrane-associated beta subunit and a small pyruvoyl-containing alpha subunit.</text>
</comment>
<comment type="subcellular location">
    <subcellularLocation>
        <location evidence="1">Cell membrane</location>
        <topology evidence="1">Peripheral membrane protein</topology>
    </subcellularLocation>
</comment>
<comment type="PTM">
    <text evidence="1">Is synthesized initially as an inactive proenzyme. Formation of the active enzyme involves a self-maturation process in which the active site pyruvoyl group is generated from an internal serine residue via an autocatalytic post-translational modification. Two non-identical subunits are generated from the proenzyme in this reaction, and the pyruvate is formed at the N-terminus of the alpha chain, which is derived from the carboxyl end of the proenzyme. The post-translation cleavage follows an unusual pathway, termed non-hydrolytic serinolysis, in which the side chain hydroxyl group of the serine supplies its oxygen atom to form the C-terminus of the beta chain, while the remainder of the serine residue undergoes an oxidative deamination to produce ammonia and the pyruvoyl prosthetic group on the alpha chain.</text>
</comment>
<comment type="similarity">
    <text evidence="1">Belongs to the phosphatidylserine decarboxylase family. PSD-A subfamily.</text>
</comment>
<protein>
    <recommendedName>
        <fullName evidence="1">Phosphatidylserine decarboxylase proenzyme</fullName>
        <ecNumber evidence="1">4.1.1.65</ecNumber>
    </recommendedName>
    <component>
        <recommendedName>
            <fullName evidence="1">Phosphatidylserine decarboxylase alpha chain</fullName>
        </recommendedName>
    </component>
    <component>
        <recommendedName>
            <fullName evidence="1">Phosphatidylserine decarboxylase beta chain</fullName>
        </recommendedName>
    </component>
</protein>
<gene>
    <name evidence="1" type="primary">psd</name>
    <name type="ordered locus">Smed_0723</name>
</gene>
<feature type="chain" id="PRO_1000026694" description="Phosphatidylserine decarboxylase beta chain" evidence="1">
    <location>
        <begin position="1"/>
        <end position="189"/>
    </location>
</feature>
<feature type="chain" id="PRO_1000026695" description="Phosphatidylserine decarboxylase alpha chain" evidence="1">
    <location>
        <begin position="190"/>
        <end position="232"/>
    </location>
</feature>
<feature type="active site" description="Schiff-base intermediate with substrate; via pyruvic acid" evidence="1">
    <location>
        <position position="190"/>
    </location>
</feature>
<feature type="site" description="Cleavage (non-hydrolytic); by autocatalysis" evidence="1">
    <location>
        <begin position="189"/>
        <end position="190"/>
    </location>
</feature>
<feature type="modified residue" description="Pyruvic acid (Ser); by autocatalysis" evidence="1">
    <location>
        <position position="190"/>
    </location>
</feature>
<reference key="1">
    <citation type="submission" date="2007-06" db="EMBL/GenBank/DDBJ databases">
        <title>Complete sequence of Sinorhizobium medicae WSM419 chromosome.</title>
        <authorList>
            <consortium name="US DOE Joint Genome Institute"/>
            <person name="Copeland A."/>
            <person name="Lucas S."/>
            <person name="Lapidus A."/>
            <person name="Barry K."/>
            <person name="Glavina del Rio T."/>
            <person name="Dalin E."/>
            <person name="Tice H."/>
            <person name="Pitluck S."/>
            <person name="Chain P."/>
            <person name="Malfatti S."/>
            <person name="Shin M."/>
            <person name="Vergez L."/>
            <person name="Schmutz J."/>
            <person name="Larimer F."/>
            <person name="Land M."/>
            <person name="Hauser L."/>
            <person name="Kyrpides N."/>
            <person name="Mikhailova N."/>
            <person name="Reeve W.G."/>
            <person name="Richardson P."/>
        </authorList>
    </citation>
    <scope>NUCLEOTIDE SEQUENCE [LARGE SCALE GENOMIC DNA]</scope>
    <source>
        <strain>WSM419</strain>
    </source>
</reference>